<dbReference type="EC" id="6.3.2.4" evidence="2"/>
<dbReference type="EMBL" id="CP000661">
    <property type="protein sequence ID" value="ABP69603.1"/>
    <property type="molecule type" value="Genomic_DNA"/>
</dbReference>
<dbReference type="SMR" id="A4WQD9"/>
<dbReference type="STRING" id="349102.Rsph17025_0697"/>
<dbReference type="KEGG" id="rsq:Rsph17025_0697"/>
<dbReference type="eggNOG" id="COG1181">
    <property type="taxonomic scope" value="Bacteria"/>
</dbReference>
<dbReference type="HOGENOM" id="CLU_039268_1_1_5"/>
<dbReference type="BioCyc" id="RSPH349102:G1G8M-719-MONOMER"/>
<dbReference type="UniPathway" id="UPA00219"/>
<dbReference type="GO" id="GO:0005737">
    <property type="term" value="C:cytoplasm"/>
    <property type="evidence" value="ECO:0007669"/>
    <property type="project" value="UniProtKB-SubCell"/>
</dbReference>
<dbReference type="GO" id="GO:0005524">
    <property type="term" value="F:ATP binding"/>
    <property type="evidence" value="ECO:0007669"/>
    <property type="project" value="UniProtKB-KW"/>
</dbReference>
<dbReference type="GO" id="GO:0008716">
    <property type="term" value="F:D-alanine-D-alanine ligase activity"/>
    <property type="evidence" value="ECO:0007669"/>
    <property type="project" value="UniProtKB-UniRule"/>
</dbReference>
<dbReference type="GO" id="GO:0046872">
    <property type="term" value="F:metal ion binding"/>
    <property type="evidence" value="ECO:0007669"/>
    <property type="project" value="UniProtKB-KW"/>
</dbReference>
<dbReference type="GO" id="GO:0071555">
    <property type="term" value="P:cell wall organization"/>
    <property type="evidence" value="ECO:0007669"/>
    <property type="project" value="UniProtKB-KW"/>
</dbReference>
<dbReference type="GO" id="GO:0009252">
    <property type="term" value="P:peptidoglycan biosynthetic process"/>
    <property type="evidence" value="ECO:0007669"/>
    <property type="project" value="UniProtKB-UniRule"/>
</dbReference>
<dbReference type="GO" id="GO:0008360">
    <property type="term" value="P:regulation of cell shape"/>
    <property type="evidence" value="ECO:0007669"/>
    <property type="project" value="UniProtKB-KW"/>
</dbReference>
<dbReference type="Gene3D" id="3.40.50.20">
    <property type="match status" value="1"/>
</dbReference>
<dbReference type="Gene3D" id="3.30.1490.20">
    <property type="entry name" value="ATP-grasp fold, A domain"/>
    <property type="match status" value="1"/>
</dbReference>
<dbReference type="Gene3D" id="3.30.470.20">
    <property type="entry name" value="ATP-grasp fold, B domain"/>
    <property type="match status" value="1"/>
</dbReference>
<dbReference type="HAMAP" id="MF_00047">
    <property type="entry name" value="Dala_Dala_lig"/>
    <property type="match status" value="1"/>
</dbReference>
<dbReference type="InterPro" id="IPR011761">
    <property type="entry name" value="ATP-grasp"/>
</dbReference>
<dbReference type="InterPro" id="IPR013815">
    <property type="entry name" value="ATP_grasp_subdomain_1"/>
</dbReference>
<dbReference type="InterPro" id="IPR000291">
    <property type="entry name" value="D-Ala_lig_Van_CS"/>
</dbReference>
<dbReference type="InterPro" id="IPR005905">
    <property type="entry name" value="D_ala_D_ala"/>
</dbReference>
<dbReference type="InterPro" id="IPR011095">
    <property type="entry name" value="Dala_Dala_lig_C"/>
</dbReference>
<dbReference type="InterPro" id="IPR011127">
    <property type="entry name" value="Dala_Dala_lig_N"/>
</dbReference>
<dbReference type="InterPro" id="IPR016185">
    <property type="entry name" value="PreATP-grasp_dom_sf"/>
</dbReference>
<dbReference type="NCBIfam" id="TIGR01205">
    <property type="entry name" value="D_ala_D_alaTIGR"/>
    <property type="match status" value="1"/>
</dbReference>
<dbReference type="NCBIfam" id="NF002378">
    <property type="entry name" value="PRK01372.1"/>
    <property type="match status" value="1"/>
</dbReference>
<dbReference type="PANTHER" id="PTHR23132">
    <property type="entry name" value="D-ALANINE--D-ALANINE LIGASE"/>
    <property type="match status" value="1"/>
</dbReference>
<dbReference type="PANTHER" id="PTHR23132:SF23">
    <property type="entry name" value="D-ALANINE--D-ALANINE LIGASE B"/>
    <property type="match status" value="1"/>
</dbReference>
<dbReference type="Pfam" id="PF07478">
    <property type="entry name" value="Dala_Dala_lig_C"/>
    <property type="match status" value="1"/>
</dbReference>
<dbReference type="Pfam" id="PF01820">
    <property type="entry name" value="Dala_Dala_lig_N"/>
    <property type="match status" value="1"/>
</dbReference>
<dbReference type="PIRSF" id="PIRSF039102">
    <property type="entry name" value="Ddl/VanB"/>
    <property type="match status" value="1"/>
</dbReference>
<dbReference type="SUPFAM" id="SSF56059">
    <property type="entry name" value="Glutathione synthetase ATP-binding domain-like"/>
    <property type="match status" value="1"/>
</dbReference>
<dbReference type="SUPFAM" id="SSF52440">
    <property type="entry name" value="PreATP-grasp domain"/>
    <property type="match status" value="1"/>
</dbReference>
<dbReference type="PROSITE" id="PS50975">
    <property type="entry name" value="ATP_GRASP"/>
    <property type="match status" value="1"/>
</dbReference>
<dbReference type="PROSITE" id="PS00843">
    <property type="entry name" value="DALA_DALA_LIGASE_1"/>
    <property type="match status" value="1"/>
</dbReference>
<dbReference type="PROSITE" id="PS00844">
    <property type="entry name" value="DALA_DALA_LIGASE_2"/>
    <property type="match status" value="1"/>
</dbReference>
<reference key="1">
    <citation type="submission" date="2007-04" db="EMBL/GenBank/DDBJ databases">
        <title>Complete sequence of chromosome of Rhodobacter sphaeroides ATCC 17025.</title>
        <authorList>
            <consortium name="US DOE Joint Genome Institute"/>
            <person name="Copeland A."/>
            <person name="Lucas S."/>
            <person name="Lapidus A."/>
            <person name="Barry K."/>
            <person name="Detter J.C."/>
            <person name="Glavina del Rio T."/>
            <person name="Hammon N."/>
            <person name="Israni S."/>
            <person name="Dalin E."/>
            <person name="Tice H."/>
            <person name="Pitluck S."/>
            <person name="Chertkov O."/>
            <person name="Brettin T."/>
            <person name="Bruce D."/>
            <person name="Han C."/>
            <person name="Schmutz J."/>
            <person name="Larimer F."/>
            <person name="Land M."/>
            <person name="Hauser L."/>
            <person name="Kyrpides N."/>
            <person name="Kim E."/>
            <person name="Richardson P."/>
            <person name="Mackenzie C."/>
            <person name="Choudhary M."/>
            <person name="Donohue T.J."/>
            <person name="Kaplan S."/>
        </authorList>
    </citation>
    <scope>NUCLEOTIDE SEQUENCE [LARGE SCALE GENOMIC DNA]</scope>
    <source>
        <strain>ATCC 17025 / ATH 2.4.3</strain>
    </source>
</reference>
<evidence type="ECO:0000250" key="1"/>
<evidence type="ECO:0000255" key="2">
    <source>
        <dbReference type="HAMAP-Rule" id="MF_00047"/>
    </source>
</evidence>
<organism>
    <name type="scientific">Cereibacter sphaeroides (strain ATCC 17025 / ATH 2.4.3)</name>
    <name type="common">Rhodobacter sphaeroides</name>
    <dbReference type="NCBI Taxonomy" id="349102"/>
    <lineage>
        <taxon>Bacteria</taxon>
        <taxon>Pseudomonadati</taxon>
        <taxon>Pseudomonadota</taxon>
        <taxon>Alphaproteobacteria</taxon>
        <taxon>Rhodobacterales</taxon>
        <taxon>Paracoccaceae</taxon>
        <taxon>Cereibacter</taxon>
    </lineage>
</organism>
<name>DDL_CERS5</name>
<feature type="chain" id="PRO_0000341162" description="D-alanine--D-alanine ligase">
    <location>
        <begin position="1"/>
        <end position="307"/>
    </location>
</feature>
<feature type="domain" description="ATP-grasp" evidence="2">
    <location>
        <begin position="108"/>
        <end position="301"/>
    </location>
</feature>
<feature type="binding site" evidence="2">
    <location>
        <begin position="135"/>
        <end position="185"/>
    </location>
    <ligand>
        <name>ATP</name>
        <dbReference type="ChEBI" id="CHEBI:30616"/>
    </ligand>
</feature>
<feature type="binding site" evidence="2">
    <location>
        <position position="252"/>
    </location>
    <ligand>
        <name>Mg(2+)</name>
        <dbReference type="ChEBI" id="CHEBI:18420"/>
        <label>1</label>
    </ligand>
</feature>
<feature type="binding site" evidence="2">
    <location>
        <position position="268"/>
    </location>
    <ligand>
        <name>Mg(2+)</name>
        <dbReference type="ChEBI" id="CHEBI:18420"/>
        <label>1</label>
    </ligand>
</feature>
<feature type="binding site" evidence="2">
    <location>
        <position position="268"/>
    </location>
    <ligand>
        <name>Mg(2+)</name>
        <dbReference type="ChEBI" id="CHEBI:18420"/>
        <label>2</label>
    </ligand>
</feature>
<feature type="binding site" evidence="2">
    <location>
        <position position="270"/>
    </location>
    <ligand>
        <name>Mg(2+)</name>
        <dbReference type="ChEBI" id="CHEBI:18420"/>
        <label>2</label>
    </ligand>
</feature>
<comment type="function">
    <text evidence="2">Cell wall formation.</text>
</comment>
<comment type="catalytic activity">
    <reaction evidence="2">
        <text>2 D-alanine + ATP = D-alanyl-D-alanine + ADP + phosphate + H(+)</text>
        <dbReference type="Rhea" id="RHEA:11224"/>
        <dbReference type="ChEBI" id="CHEBI:15378"/>
        <dbReference type="ChEBI" id="CHEBI:30616"/>
        <dbReference type="ChEBI" id="CHEBI:43474"/>
        <dbReference type="ChEBI" id="CHEBI:57416"/>
        <dbReference type="ChEBI" id="CHEBI:57822"/>
        <dbReference type="ChEBI" id="CHEBI:456216"/>
        <dbReference type="EC" id="6.3.2.4"/>
    </reaction>
</comment>
<comment type="cofactor">
    <cofactor evidence="1">
        <name>Mg(2+)</name>
        <dbReference type="ChEBI" id="CHEBI:18420"/>
    </cofactor>
    <cofactor evidence="1">
        <name>Mn(2+)</name>
        <dbReference type="ChEBI" id="CHEBI:29035"/>
    </cofactor>
    <text evidence="1">Binds 2 magnesium or manganese ions per subunit.</text>
</comment>
<comment type="pathway">
    <text evidence="2">Cell wall biogenesis; peptidoglycan biosynthesis.</text>
</comment>
<comment type="subcellular location">
    <subcellularLocation>
        <location evidence="2">Cytoplasm</location>
    </subcellularLocation>
</comment>
<comment type="similarity">
    <text evidence="2">Belongs to the D-alanine--D-alanine ligase family.</text>
</comment>
<sequence>MAGRSGRTFPRVAVLMGGTSSEREVSLSSGHSCSAALRDAGYEVTEVDAGPDLARVLAEVQPDAVFNALHGRWGEDGCVQGLLEWLRIPYTHSGVLASALAMDKARAKEVFAAAGLPVTQSVIATPDEVQAGHVLPPPYVVKPNCEGSSVGVYIVQADANGPPRLAPDMPRDLMVETYIPGRELTVTVMGDRALAVTDIVTDGWYDYDAKYRPGGSRHVVPAELPAEITDACLDIALRAHRALGCRGISRSDLRWDESRGAEGLILLETNTQPGMTPTSLSPEQAAHCGLSFPEFCAWMVEDASCNR</sequence>
<protein>
    <recommendedName>
        <fullName evidence="2">D-alanine--D-alanine ligase</fullName>
        <ecNumber evidence="2">6.3.2.4</ecNumber>
    </recommendedName>
    <alternativeName>
        <fullName evidence="2">D-Ala-D-Ala ligase</fullName>
    </alternativeName>
    <alternativeName>
        <fullName evidence="2">D-alanylalanine synthetase</fullName>
    </alternativeName>
</protein>
<gene>
    <name evidence="2" type="primary">ddl</name>
    <name type="ordered locus">Rsph17025_0697</name>
</gene>
<keyword id="KW-0067">ATP-binding</keyword>
<keyword id="KW-0133">Cell shape</keyword>
<keyword id="KW-0961">Cell wall biogenesis/degradation</keyword>
<keyword id="KW-0963">Cytoplasm</keyword>
<keyword id="KW-0436">Ligase</keyword>
<keyword id="KW-0460">Magnesium</keyword>
<keyword id="KW-0464">Manganese</keyword>
<keyword id="KW-0479">Metal-binding</keyword>
<keyword id="KW-0547">Nucleotide-binding</keyword>
<keyword id="KW-0573">Peptidoglycan synthesis</keyword>
<accession>A4WQD9</accession>
<proteinExistence type="inferred from homology"/>